<dbReference type="EMBL" id="BC133328">
    <property type="protein sequence ID" value="AAI33329.1"/>
    <property type="molecule type" value="mRNA"/>
</dbReference>
<dbReference type="RefSeq" id="NP_001074979.1">
    <property type="nucleotide sequence ID" value="NM_001081510.1"/>
</dbReference>
<dbReference type="RefSeq" id="XP_015331030.1">
    <property type="nucleotide sequence ID" value="XM_015475544.1"/>
</dbReference>
<dbReference type="RefSeq" id="XP_059731875.1">
    <property type="nucleotide sequence ID" value="XM_059875892.1"/>
</dbReference>
<dbReference type="BMRB" id="A2VDN6"/>
<dbReference type="SMR" id="A2VDN6"/>
<dbReference type="FunCoup" id="A2VDN6">
    <property type="interactions" value="5176"/>
</dbReference>
<dbReference type="STRING" id="9913.ENSBTAP00000004398"/>
<dbReference type="PaxDb" id="9913-ENSBTAP00000004398"/>
<dbReference type="PeptideAtlas" id="A2VDN6"/>
<dbReference type="Ensembl" id="ENSBTAT00000090840.1">
    <property type="protein sequence ID" value="ENSBTAP00000077850.1"/>
    <property type="gene ID" value="ENSBTAG00000003390.7"/>
</dbReference>
<dbReference type="GeneID" id="504381"/>
<dbReference type="KEGG" id="bta:504381"/>
<dbReference type="CTD" id="10291"/>
<dbReference type="VEuPathDB" id="HostDB:ENSBTAG00000003390"/>
<dbReference type="VGNC" id="VGNC:34506">
    <property type="gene designation" value="SF3A1"/>
</dbReference>
<dbReference type="eggNOG" id="KOG0007">
    <property type="taxonomic scope" value="Eukaryota"/>
</dbReference>
<dbReference type="GeneTree" id="ENSGT00730000111077"/>
<dbReference type="HOGENOM" id="CLU_013259_1_0_1"/>
<dbReference type="InParanoid" id="A2VDN6"/>
<dbReference type="OMA" id="HAYYRHR"/>
<dbReference type="OrthoDB" id="447637at2759"/>
<dbReference type="TreeFam" id="TF105705"/>
<dbReference type="Reactome" id="R-BTA-72163">
    <property type="pathway name" value="mRNA Splicing - Major Pathway"/>
</dbReference>
<dbReference type="Proteomes" id="UP000009136">
    <property type="component" value="Chromosome 17"/>
</dbReference>
<dbReference type="Bgee" id="ENSBTAG00000003390">
    <property type="expression patterns" value="Expressed in vas deferens and 108 other cell types or tissues"/>
</dbReference>
<dbReference type="GO" id="GO:0071013">
    <property type="term" value="C:catalytic step 2 spliceosome"/>
    <property type="evidence" value="ECO:0000318"/>
    <property type="project" value="GO_Central"/>
</dbReference>
<dbReference type="GO" id="GO:0016607">
    <property type="term" value="C:nuclear speck"/>
    <property type="evidence" value="ECO:0000250"/>
    <property type="project" value="UniProtKB"/>
</dbReference>
<dbReference type="GO" id="GO:0005634">
    <property type="term" value="C:nucleus"/>
    <property type="evidence" value="ECO:0000250"/>
    <property type="project" value="UniProtKB"/>
</dbReference>
<dbReference type="GO" id="GO:0005686">
    <property type="term" value="C:U2 snRNP"/>
    <property type="evidence" value="ECO:0000250"/>
    <property type="project" value="UniProtKB"/>
</dbReference>
<dbReference type="GO" id="GO:0071005">
    <property type="term" value="C:U2-type precatalytic spliceosome"/>
    <property type="evidence" value="ECO:0000250"/>
    <property type="project" value="UniProtKB"/>
</dbReference>
<dbReference type="GO" id="GO:0071004">
    <property type="term" value="C:U2-type prespliceosome"/>
    <property type="evidence" value="ECO:0000250"/>
    <property type="project" value="UniProtKB"/>
</dbReference>
<dbReference type="GO" id="GO:0005684">
    <property type="term" value="C:U2-type spliceosomal complex"/>
    <property type="evidence" value="ECO:0000250"/>
    <property type="project" value="UniProtKB"/>
</dbReference>
<dbReference type="GO" id="GO:0003723">
    <property type="term" value="F:RNA binding"/>
    <property type="evidence" value="ECO:0000250"/>
    <property type="project" value="UniProtKB"/>
</dbReference>
<dbReference type="GO" id="GO:0045292">
    <property type="term" value="P:mRNA cis splicing, via spliceosome"/>
    <property type="evidence" value="ECO:0007669"/>
    <property type="project" value="InterPro"/>
</dbReference>
<dbReference type="GO" id="GO:0000398">
    <property type="term" value="P:mRNA splicing, via spliceosome"/>
    <property type="evidence" value="ECO:0000250"/>
    <property type="project" value="UniProtKB"/>
</dbReference>
<dbReference type="GO" id="GO:1903241">
    <property type="term" value="P:U2-type prespliceosome assembly"/>
    <property type="evidence" value="ECO:0000250"/>
    <property type="project" value="UniProtKB"/>
</dbReference>
<dbReference type="CDD" id="cd01800">
    <property type="entry name" value="Ubl_SF3a120"/>
    <property type="match status" value="1"/>
</dbReference>
<dbReference type="FunFam" id="1.10.10.790:FF:000002">
    <property type="entry name" value="Splicing factor 3A subunit 1"/>
    <property type="match status" value="1"/>
</dbReference>
<dbReference type="FunFam" id="3.10.20.90:FF:000091">
    <property type="entry name" value="Splicing factor 3A subunit 1"/>
    <property type="match status" value="1"/>
</dbReference>
<dbReference type="FunFam" id="1.10.10.790:FF:000001">
    <property type="entry name" value="Splicing factor 3a, subunit 1"/>
    <property type="match status" value="1"/>
</dbReference>
<dbReference type="Gene3D" id="3.10.20.90">
    <property type="entry name" value="Phosphatidylinositol 3-kinase Catalytic Subunit, Chain A, domain 1"/>
    <property type="match status" value="1"/>
</dbReference>
<dbReference type="Gene3D" id="1.10.10.790">
    <property type="entry name" value="Surp module"/>
    <property type="match status" value="2"/>
</dbReference>
<dbReference type="InterPro" id="IPR045146">
    <property type="entry name" value="SF3A1"/>
</dbReference>
<dbReference type="InterPro" id="IPR022030">
    <property type="entry name" value="SF3A1_dom"/>
</dbReference>
<dbReference type="InterPro" id="IPR035563">
    <property type="entry name" value="SF3As1_ubi"/>
</dbReference>
<dbReference type="InterPro" id="IPR000061">
    <property type="entry name" value="Surp"/>
</dbReference>
<dbReference type="InterPro" id="IPR035967">
    <property type="entry name" value="SWAP/Surp_sf"/>
</dbReference>
<dbReference type="InterPro" id="IPR000626">
    <property type="entry name" value="Ubiquitin-like_dom"/>
</dbReference>
<dbReference type="InterPro" id="IPR029071">
    <property type="entry name" value="Ubiquitin-like_domsf"/>
</dbReference>
<dbReference type="PANTHER" id="PTHR15316">
    <property type="entry name" value="SPLICEOSOME ASSOCIATED PROTEIN 114/SWAP SPLICING FACTOR-RELATED"/>
    <property type="match status" value="1"/>
</dbReference>
<dbReference type="PANTHER" id="PTHR15316:SF1">
    <property type="entry name" value="SPLICING FACTOR 3A SUBUNIT 1"/>
    <property type="match status" value="1"/>
</dbReference>
<dbReference type="Pfam" id="PF12230">
    <property type="entry name" value="PRP21_like_P"/>
    <property type="match status" value="1"/>
</dbReference>
<dbReference type="Pfam" id="PF01805">
    <property type="entry name" value="Surp"/>
    <property type="match status" value="2"/>
</dbReference>
<dbReference type="Pfam" id="PF00240">
    <property type="entry name" value="ubiquitin"/>
    <property type="match status" value="1"/>
</dbReference>
<dbReference type="SMART" id="SM00648">
    <property type="entry name" value="SWAP"/>
    <property type="match status" value="2"/>
</dbReference>
<dbReference type="SMART" id="SM00213">
    <property type="entry name" value="UBQ"/>
    <property type="match status" value="1"/>
</dbReference>
<dbReference type="SUPFAM" id="SSF109905">
    <property type="entry name" value="Surp module (SWAP domain)"/>
    <property type="match status" value="2"/>
</dbReference>
<dbReference type="SUPFAM" id="SSF54236">
    <property type="entry name" value="Ubiquitin-like"/>
    <property type="match status" value="1"/>
</dbReference>
<dbReference type="PROSITE" id="PS50128">
    <property type="entry name" value="SURP"/>
    <property type="match status" value="2"/>
</dbReference>
<dbReference type="PROSITE" id="PS50053">
    <property type="entry name" value="UBIQUITIN_2"/>
    <property type="match status" value="1"/>
</dbReference>
<comment type="function">
    <text evidence="2">Component of the 17S U2 SnRNP complex of the spliceosome, a large ribonucleoprotein complex that removes introns from transcribed pre-mRNAs. The 17S U2 SnRNP complex (1) directly participates in early spliceosome assembly and (2) mediates recognition of the intron branch site during pre-mRNA splicing by promoting the selection of the pre-mRNA branch-site adenosine, the nucleophile for the first step of splicing. Within the 17S U2 SnRNP complex, SF3A1 is part of the SF3A subcomplex that contributes to the assembly of the 17S U2 snRNP, and the subsequent assembly of the pre-spliceosome 'E' complex and the pre-catalytic spliceosome 'A' complex. Involved in pre-mRNA splicing as a component of pre-catalytic spliceosome 'B' complexes.</text>
</comment>
<comment type="subunit">
    <text evidence="2 3">Component of the 17S U2 SnRNP complex, a ribonucleoprotein complex that contains small nuclear RNA (snRNA) U2 and a number of specific proteins. Part of the SF3A subcomplex of the 17S U2 SnRNP complex which is composed of three subunits; SF3A3/SAP61, SF3A2/SAP62 and SF3A1/SAP114. SF3A associates with the splicing factor SF3B and a 12S RNA unit to form the mature 17S U2 small nuclear ribonucleoprotein complex (17S U2 snRNP). SF3A1 functions as a scaffold that interacts directly with both SF3A2 and SF3A3. Identified in the spliceosome 'E' complex, a precursor of the spliceosome 'A' complex. Identified in the spliceosome 'A' and 'B' complexes. Identified in the spliceosome 'C' complex. Interacts with P2RX6; resulting in a reduction of the splicing activity (By similarity).</text>
</comment>
<comment type="subcellular location">
    <subcellularLocation>
        <location evidence="2">Nucleus</location>
    </subcellularLocation>
    <subcellularLocation>
        <location evidence="2">Nucleus speckle</location>
    </subcellularLocation>
</comment>
<comment type="domain">
    <text evidence="1">SURP motif 2 mediates direct binding to SF3A3.</text>
</comment>
<protein>
    <recommendedName>
        <fullName>Splicing factor 3A subunit 1</fullName>
    </recommendedName>
</protein>
<proteinExistence type="evidence at transcript level"/>
<accession>A2VDN6</accession>
<keyword id="KW-0007">Acetylation</keyword>
<keyword id="KW-1017">Isopeptide bond</keyword>
<keyword id="KW-0507">mRNA processing</keyword>
<keyword id="KW-0508">mRNA splicing</keyword>
<keyword id="KW-0539">Nucleus</keyword>
<keyword id="KW-0597">Phosphoprotein</keyword>
<keyword id="KW-1185">Reference proteome</keyword>
<keyword id="KW-0677">Repeat</keyword>
<keyword id="KW-0747">Spliceosome</keyword>
<keyword id="KW-0832">Ubl conjugation</keyword>
<organism>
    <name type="scientific">Bos taurus</name>
    <name type="common">Bovine</name>
    <dbReference type="NCBI Taxonomy" id="9913"/>
    <lineage>
        <taxon>Eukaryota</taxon>
        <taxon>Metazoa</taxon>
        <taxon>Chordata</taxon>
        <taxon>Craniata</taxon>
        <taxon>Vertebrata</taxon>
        <taxon>Euteleostomi</taxon>
        <taxon>Mammalia</taxon>
        <taxon>Eutheria</taxon>
        <taxon>Laurasiatheria</taxon>
        <taxon>Artiodactyla</taxon>
        <taxon>Ruminantia</taxon>
        <taxon>Pecora</taxon>
        <taxon>Bovidae</taxon>
        <taxon>Bovinae</taxon>
        <taxon>Bos</taxon>
    </lineage>
</organism>
<name>SF3A1_BOVIN</name>
<reference key="1">
    <citation type="submission" date="2007-02" db="EMBL/GenBank/DDBJ databases">
        <authorList>
            <consortium name="NIH - Mammalian Gene Collection (MGC) project"/>
        </authorList>
    </citation>
    <scope>NUCLEOTIDE SEQUENCE [LARGE SCALE MRNA]</scope>
    <source>
        <strain>Hereford</strain>
        <tissue>Basal ganglia</tissue>
    </source>
</reference>
<sequence>MPAGPVQAVPPPPPAATEPKQPTEEEASSKEDSTPSKPVVGIIYPPPEVRNIVDKTASFVARNGPEFEARIRQNEINNPKFNFLNPNDPYHAYYRHKVSEFKEGKAQEPSAAIPKVMQQQQQASQQQLPQKVQAQVIQETIVPKEPPPEFEFIADPPSISAFDLDVVKLTAQFVARNGRQFLTQLMQKEQRNYQFDFLRPQHSLFNYFTKLVEQYTKILIPPKGLFTKLKKEAENPREVLDQVCYRVEWAKFQERERKKEEEEKEKERVAYAQIDWHDFVVVETVDFQPNEQGNFPPPTTPEELGARILIQERYEKFGESEEVEMEVESDEEDEKQEKAEEPPSQLDQDTQVQDMDEGSDDEEEGQKVPPPPETPMPPPLPPTPDQVIVRKDYDPKASKPLPPAPAPDEYLVSPITGEKIPASKMQEHMRIGLLDPRWLEQRDRSIREKQSDDEVYAPGLDIESSLKQLAERRTDIFGVEETAIGKKIGEEEIQKPEEKVTWDGHSGSMARTQQAAQANITLQEQIEAIHKAKGLVPEDDTKEKIGPSKPNEIPQQPPPPSSATNIPSSAPPITSVPRPPAMPPPVRTTVVSAVPVMPRPPMASVVRLPPGSVIAPMPPIIHAPRINVVPMPPSAPPIMAPRPPPMIVPTAFVPAPPVAPVPAPAPMPPVHPPPPMEDEPASKKLKTEDSLMPEEEFLRRNKGPVSIKVQVPNMQDKTEWKLNGQVLVFTLPLTDQVSVIKVKIHEATGMPAGKQKLQYEGIFIKDSNSLAYYNMANGAVIHLALKERGGRKK</sequence>
<evidence type="ECO:0000250" key="1"/>
<evidence type="ECO:0000250" key="2">
    <source>
        <dbReference type="UniProtKB" id="Q15459"/>
    </source>
</evidence>
<evidence type="ECO:0000250" key="3">
    <source>
        <dbReference type="UniProtKB" id="Q8K4Z5"/>
    </source>
</evidence>
<evidence type="ECO:0000255" key="4">
    <source>
        <dbReference type="PROSITE-ProRule" id="PRU00214"/>
    </source>
</evidence>
<evidence type="ECO:0000256" key="5">
    <source>
        <dbReference type="SAM" id="MobiDB-lite"/>
    </source>
</evidence>
<gene>
    <name type="primary">SF3A1</name>
</gene>
<feature type="chain" id="PRO_0000295296" description="Splicing factor 3A subunit 1">
    <location>
        <begin position="1"/>
        <end position="793"/>
    </location>
</feature>
<feature type="repeat" description="SURP motif 1">
    <location>
        <begin position="52"/>
        <end position="94"/>
    </location>
</feature>
<feature type="repeat" description="SURP motif 2">
    <location>
        <begin position="166"/>
        <end position="208"/>
    </location>
</feature>
<feature type="domain" description="Ubiquitin-like" evidence="4">
    <location>
        <begin position="707"/>
        <end position="793"/>
    </location>
</feature>
<feature type="region of interest" description="Disordered" evidence="5">
    <location>
        <begin position="1"/>
        <end position="42"/>
    </location>
</feature>
<feature type="region of interest" description="Disordered" evidence="5">
    <location>
        <begin position="318"/>
        <end position="412"/>
    </location>
</feature>
<feature type="region of interest" description="Disordered" evidence="5">
    <location>
        <begin position="488"/>
        <end position="518"/>
    </location>
</feature>
<feature type="region of interest" description="Disordered" evidence="5">
    <location>
        <begin position="530"/>
        <end position="584"/>
    </location>
</feature>
<feature type="region of interest" description="Disordered" evidence="5">
    <location>
        <begin position="666"/>
        <end position="685"/>
    </location>
</feature>
<feature type="region of interest" description="Required and sufficient for nuclear import" evidence="2">
    <location>
        <begin position="680"/>
        <end position="702"/>
    </location>
</feature>
<feature type="compositionally biased region" description="Basic and acidic residues" evidence="5">
    <location>
        <begin position="21"/>
        <end position="34"/>
    </location>
</feature>
<feature type="compositionally biased region" description="Acidic residues" evidence="5">
    <location>
        <begin position="320"/>
        <end position="334"/>
    </location>
</feature>
<feature type="compositionally biased region" description="Acidic residues" evidence="5">
    <location>
        <begin position="354"/>
        <end position="364"/>
    </location>
</feature>
<feature type="compositionally biased region" description="Pro residues" evidence="5">
    <location>
        <begin position="368"/>
        <end position="384"/>
    </location>
</feature>
<feature type="compositionally biased region" description="Basic and acidic residues" evidence="5">
    <location>
        <begin position="388"/>
        <end position="397"/>
    </location>
</feature>
<feature type="compositionally biased region" description="Basic and acidic residues" evidence="5">
    <location>
        <begin position="488"/>
        <end position="502"/>
    </location>
</feature>
<feature type="compositionally biased region" description="Polar residues" evidence="5">
    <location>
        <begin position="509"/>
        <end position="518"/>
    </location>
</feature>
<feature type="compositionally biased region" description="Polar residues" evidence="5">
    <location>
        <begin position="563"/>
        <end position="572"/>
    </location>
</feature>
<feature type="compositionally biased region" description="Pro residues" evidence="5">
    <location>
        <begin position="666"/>
        <end position="675"/>
    </location>
</feature>
<feature type="site" description="Critical for binding to SF3A3" evidence="1">
    <location>
        <position position="169"/>
    </location>
</feature>
<feature type="modified residue" description="N6-acetyllysine" evidence="2">
    <location>
        <position position="55"/>
    </location>
</feature>
<feature type="modified residue" description="Phosphoserine" evidence="2">
    <location>
        <position position="320"/>
    </location>
</feature>
<feature type="modified residue" description="Phosphoserine" evidence="2">
    <location>
        <position position="329"/>
    </location>
</feature>
<feature type="modified residue" description="Phosphoserine" evidence="2">
    <location>
        <position position="359"/>
    </location>
</feature>
<feature type="modified residue" description="Phosphoserine" evidence="2">
    <location>
        <position position="413"/>
    </location>
</feature>
<feature type="modified residue" description="Phosphoserine" evidence="2">
    <location>
        <position position="451"/>
    </location>
</feature>
<feature type="modified residue" description="Phosphotyrosine" evidence="2">
    <location>
        <position position="456"/>
    </location>
</feature>
<feature type="modified residue" description="Phosphoserine" evidence="2">
    <location>
        <position position="508"/>
    </location>
</feature>
<feature type="modified residue" description="Phosphotyrosine" evidence="2">
    <location>
        <position position="759"/>
    </location>
</feature>
<feature type="cross-link" description="Glycyl lysine isopeptide (Lys-Gly) (interchain with G-Cter in SUMO2)" evidence="2">
    <location>
        <position position="20"/>
    </location>
</feature>
<feature type="cross-link" description="Glycyl lysine isopeptide (Lys-Gly) (interchain with G-Cter in SUMO2)" evidence="2">
    <location>
        <position position="131"/>
    </location>
</feature>
<feature type="cross-link" description="Glycyl lysine isopeptide (Lys-Gly) (interchain with G-Cter in SUMO2)" evidence="2">
    <location>
        <position position="424"/>
    </location>
</feature>
<feature type="cross-link" description="Glycyl lysine isopeptide (Lys-Gly) (interchain with G-Cter in SUMO2)" evidence="2">
    <location>
        <position position="499"/>
    </location>
</feature>
<feature type="cross-link" description="Glycyl lysine isopeptide (Lys-Gly) (interchain with G-Cter in SUMO2)" evidence="2">
    <location>
        <position position="542"/>
    </location>
</feature>
<feature type="cross-link" description="Glycyl lysine isopeptide (Lys-Gly) (interchain with G-Cter in SUMO2)" evidence="2">
    <location>
        <position position="686"/>
    </location>
</feature>